<dbReference type="GO" id="GO:0005576">
    <property type="term" value="C:extracellular region"/>
    <property type="evidence" value="ECO:0007669"/>
    <property type="project" value="UniProtKB-SubCell"/>
</dbReference>
<dbReference type="GO" id="GO:0042742">
    <property type="term" value="P:defense response to bacterium"/>
    <property type="evidence" value="ECO:0007669"/>
    <property type="project" value="UniProtKB-KW"/>
</dbReference>
<dbReference type="InterPro" id="IPR012520">
    <property type="entry name" value="Antimicrobial_frog_1"/>
</dbReference>
<dbReference type="Pfam" id="PF08018">
    <property type="entry name" value="Antimicrobial_1"/>
    <property type="match status" value="1"/>
</dbReference>
<organism>
    <name type="scientific">Rana luteiventris</name>
    <name type="common">Columbia spotted frog</name>
    <name type="synonym">Rana pretiosa luteiventris</name>
    <dbReference type="NCBI Taxonomy" id="58176"/>
    <lineage>
        <taxon>Eukaryota</taxon>
        <taxon>Metazoa</taxon>
        <taxon>Chordata</taxon>
        <taxon>Craniata</taxon>
        <taxon>Vertebrata</taxon>
        <taxon>Euteleostomi</taxon>
        <taxon>Amphibia</taxon>
        <taxon>Batrachia</taxon>
        <taxon>Anura</taxon>
        <taxon>Neobatrachia</taxon>
        <taxon>Ranoidea</taxon>
        <taxon>Ranidae</taxon>
        <taxon>Rana</taxon>
        <taxon>Rana</taxon>
    </lineage>
</organism>
<proteinExistence type="evidence at protein level"/>
<keyword id="KW-0878">Amphibian defense peptide</keyword>
<keyword id="KW-0044">Antibiotic</keyword>
<keyword id="KW-0929">Antimicrobial</keyword>
<keyword id="KW-0903">Direct protein sequencing</keyword>
<keyword id="KW-1015">Disulfide bond</keyword>
<keyword id="KW-0964">Secreted</keyword>
<accession>P82826</accession>
<comment type="function">
    <text evidence="2">Antibacterial activity against Gram-positive bacterium S.aureus and Gram-negative bacterium E.coli.</text>
</comment>
<comment type="subcellular location">
    <subcellularLocation>
        <location>Secreted</location>
    </subcellularLocation>
</comment>
<comment type="tissue specificity">
    <text>Expressed by the skin glands.</text>
</comment>
<comment type="mass spectrometry"/>
<comment type="similarity">
    <text evidence="3">Belongs to the frog skin active peptide (FSAP) family. Brevinin subfamily.</text>
</comment>
<sequence>FLPMLAGLAASMVPKFVCLITKKC</sequence>
<name>BR1B_RANLU</name>
<reference key="1">
    <citation type="journal article" date="2000" name="Eur. J. Biochem.">
        <title>Peptides with antimicrobial activity from four different families isolated from the skins of the North American frogs Rana luteiventris, Rana berlandieri and Rana pipiens.</title>
        <authorList>
            <person name="Goraya J."/>
            <person name="Wang Y."/>
            <person name="Li Z."/>
            <person name="O'Flaherty M."/>
            <person name="Knoop F.C."/>
            <person name="Platz J.E."/>
            <person name="Conlon J.M."/>
        </authorList>
    </citation>
    <scope>PROTEIN SEQUENCE</scope>
    <scope>FUNCTION</scope>
    <scope>MASS SPECTROMETRY</scope>
    <source>
        <tissue>Skin secretion</tissue>
    </source>
</reference>
<evidence type="ECO:0000250" key="1"/>
<evidence type="ECO:0000269" key="2">
    <source>
    </source>
</evidence>
<evidence type="ECO:0000305" key="3"/>
<protein>
    <recommendedName>
        <fullName>Brevinin-1Lb</fullName>
    </recommendedName>
</protein>
<feature type="peptide" id="PRO_0000043541" description="Brevinin-1Lb">
    <location>
        <begin position="1"/>
        <end position="24"/>
    </location>
</feature>
<feature type="disulfide bond" evidence="1">
    <location>
        <begin position="18"/>
        <end position="24"/>
    </location>
</feature>